<keyword id="KW-0143">Chaperone</keyword>
<keyword id="KW-0963">Cytoplasm</keyword>
<keyword id="KW-1185">Reference proteome</keyword>
<dbReference type="EMBL" id="AE016853">
    <property type="protein sequence ID" value="AAO57683.1"/>
    <property type="molecule type" value="Genomic_DNA"/>
</dbReference>
<dbReference type="RefSeq" id="NP_793988.1">
    <property type="nucleotide sequence ID" value="NC_004578.1"/>
</dbReference>
<dbReference type="RefSeq" id="WP_003378499.1">
    <property type="nucleotide sequence ID" value="NC_004578.1"/>
</dbReference>
<dbReference type="SMR" id="Q87XF1"/>
<dbReference type="STRING" id="223283.PSPTO_4227"/>
<dbReference type="KEGG" id="pst:PSPTO_4227"/>
<dbReference type="PATRIC" id="fig|223283.9.peg.4334"/>
<dbReference type="eggNOG" id="COG2938">
    <property type="taxonomic scope" value="Bacteria"/>
</dbReference>
<dbReference type="HOGENOM" id="CLU_103054_2_2_6"/>
<dbReference type="OrthoDB" id="9180899at2"/>
<dbReference type="PhylomeDB" id="Q87XF1"/>
<dbReference type="Proteomes" id="UP000002515">
    <property type="component" value="Chromosome"/>
</dbReference>
<dbReference type="GO" id="GO:0005737">
    <property type="term" value="C:cytoplasm"/>
    <property type="evidence" value="ECO:0007669"/>
    <property type="project" value="UniProtKB-SubCell"/>
</dbReference>
<dbReference type="GO" id="GO:0006105">
    <property type="term" value="P:succinate metabolic process"/>
    <property type="evidence" value="ECO:0007669"/>
    <property type="project" value="TreeGrafter"/>
</dbReference>
<dbReference type="Gene3D" id="1.10.150.250">
    <property type="entry name" value="Flavinator of succinate dehydrogenase"/>
    <property type="match status" value="1"/>
</dbReference>
<dbReference type="InterPro" id="IPR005631">
    <property type="entry name" value="SDH"/>
</dbReference>
<dbReference type="InterPro" id="IPR036714">
    <property type="entry name" value="SDH_sf"/>
</dbReference>
<dbReference type="InterPro" id="IPR050531">
    <property type="entry name" value="SdhE_FAD_assembly_factor"/>
</dbReference>
<dbReference type="PANTHER" id="PTHR39585">
    <property type="entry name" value="FAD ASSEMBLY FACTOR SDHE"/>
    <property type="match status" value="1"/>
</dbReference>
<dbReference type="PANTHER" id="PTHR39585:SF1">
    <property type="entry name" value="FAD ASSEMBLY FACTOR SDHE"/>
    <property type="match status" value="1"/>
</dbReference>
<dbReference type="Pfam" id="PF03937">
    <property type="entry name" value="Sdh5"/>
    <property type="match status" value="1"/>
</dbReference>
<dbReference type="SUPFAM" id="SSF109910">
    <property type="entry name" value="YgfY-like"/>
    <property type="match status" value="1"/>
</dbReference>
<name>SDHE_PSESM</name>
<organism>
    <name type="scientific">Pseudomonas syringae pv. tomato (strain ATCC BAA-871 / DC3000)</name>
    <dbReference type="NCBI Taxonomy" id="223283"/>
    <lineage>
        <taxon>Bacteria</taxon>
        <taxon>Pseudomonadati</taxon>
        <taxon>Pseudomonadota</taxon>
        <taxon>Gammaproteobacteria</taxon>
        <taxon>Pseudomonadales</taxon>
        <taxon>Pseudomonadaceae</taxon>
        <taxon>Pseudomonas</taxon>
    </lineage>
</organism>
<comment type="function">
    <text evidence="1">An FAD assembly protein, which accelerates covalent attachment of the cofactor into other proteins. Plays an essential role in the assembly of succinate dehydrogenase (SDH, respiratory complex II), an enzyme complex that is a component of both the tricarboxylic acid cycle and the electron transport chain, and which couples the oxidation of succinate to fumarate with the reduction of ubiquinone (coenzyme Q) to ubiquinol. Required for flavinylation (covalent attachment of FAD) of the flavoprotein subunit SdhA of SDH and other flavinylated proteins as well.</text>
</comment>
<comment type="subcellular location">
    <subcellularLocation>
        <location evidence="1">Cytoplasm</location>
    </subcellularLocation>
</comment>
<comment type="similarity">
    <text evidence="2">Belongs to the SdhE FAD assembly factor family.</text>
</comment>
<evidence type="ECO:0000250" key="1">
    <source>
        <dbReference type="UniProtKB" id="G4V4G2"/>
    </source>
</evidence>
<evidence type="ECO:0000305" key="2"/>
<protein>
    <recommendedName>
        <fullName>FAD assembly factor SdhE</fullName>
    </recommendedName>
</protein>
<feature type="chain" id="PRO_0000214415" description="FAD assembly factor SdhE">
    <location>
        <begin position="1"/>
        <end position="84"/>
    </location>
</feature>
<accession>Q87XF1</accession>
<proteinExistence type="inferred from homology"/>
<sequence>MVEDVELNRLYWHSRRGMLELDVLLVPFVREVYPHLNDVDRDLYRRLLTCEDQDMFGWFMQRAESEDAELQRMVRMILDRVQPK</sequence>
<gene>
    <name type="primary">sdhE</name>
    <name type="ordered locus">PSPTO_4227</name>
</gene>
<reference key="1">
    <citation type="journal article" date="2003" name="Proc. Natl. Acad. Sci. U.S.A.">
        <title>The complete genome sequence of the Arabidopsis and tomato pathogen Pseudomonas syringae pv. tomato DC3000.</title>
        <authorList>
            <person name="Buell C.R."/>
            <person name="Joardar V."/>
            <person name="Lindeberg M."/>
            <person name="Selengut J."/>
            <person name="Paulsen I.T."/>
            <person name="Gwinn M.L."/>
            <person name="Dodson R.J."/>
            <person name="DeBoy R.T."/>
            <person name="Durkin A.S."/>
            <person name="Kolonay J.F."/>
            <person name="Madupu R."/>
            <person name="Daugherty S.C."/>
            <person name="Brinkac L.M."/>
            <person name="Beanan M.J."/>
            <person name="Haft D.H."/>
            <person name="Nelson W.C."/>
            <person name="Davidsen T.M."/>
            <person name="Zafar N."/>
            <person name="Zhou L."/>
            <person name="Liu J."/>
            <person name="Yuan Q."/>
            <person name="Khouri H.M."/>
            <person name="Fedorova N.B."/>
            <person name="Tran B."/>
            <person name="Russell D."/>
            <person name="Berry K.J."/>
            <person name="Utterback T.R."/>
            <person name="Van Aken S.E."/>
            <person name="Feldblyum T.V."/>
            <person name="D'Ascenzo M."/>
            <person name="Deng W.-L."/>
            <person name="Ramos A.R."/>
            <person name="Alfano J.R."/>
            <person name="Cartinhour S."/>
            <person name="Chatterjee A.K."/>
            <person name="Delaney T.P."/>
            <person name="Lazarowitz S.G."/>
            <person name="Martin G.B."/>
            <person name="Schneider D.J."/>
            <person name="Tang X."/>
            <person name="Bender C.L."/>
            <person name="White O."/>
            <person name="Fraser C.M."/>
            <person name="Collmer A."/>
        </authorList>
    </citation>
    <scope>NUCLEOTIDE SEQUENCE [LARGE SCALE GENOMIC DNA]</scope>
    <source>
        <strain>ATCC BAA-871 / DC3000</strain>
    </source>
</reference>